<reference key="1">
    <citation type="journal article" date="2008" name="Proc. Natl. Acad. Sci. U.S.A.">
        <title>The genome sequence of Bifidobacterium longum subsp. infantis reveals adaptations for milk utilization within the infant microbiome.</title>
        <authorList>
            <person name="Sela D.A."/>
            <person name="Chapman J."/>
            <person name="Adeuya A."/>
            <person name="Kim J.H."/>
            <person name="Chen F."/>
            <person name="Whitehead T.R."/>
            <person name="Lapidus A."/>
            <person name="Rokhsar D.S."/>
            <person name="Lebrilla C.B."/>
            <person name="German J.B."/>
            <person name="Price N.P."/>
            <person name="Richardson P.M."/>
            <person name="Mills D.A."/>
        </authorList>
    </citation>
    <scope>NUCLEOTIDE SEQUENCE [LARGE SCALE GENOMIC DNA]</scope>
    <source>
        <strain>ATCC 15697 / DSM 20088 / JCM 1222 / NCTC 11817 / S12</strain>
    </source>
</reference>
<reference key="2">
    <citation type="journal article" date="2011" name="Nature">
        <title>Bifidobacteria can protect from enteropathogenic infection through production of acetate.</title>
        <authorList>
            <person name="Fukuda S."/>
            <person name="Toh H."/>
            <person name="Hase K."/>
            <person name="Oshima K."/>
            <person name="Nakanishi Y."/>
            <person name="Yoshimura K."/>
            <person name="Tobe T."/>
            <person name="Clarke J.M."/>
            <person name="Topping D.L."/>
            <person name="Suzuki T."/>
            <person name="Taylor T.D."/>
            <person name="Itoh K."/>
            <person name="Kikuchi J."/>
            <person name="Morita H."/>
            <person name="Hattori M."/>
            <person name="Ohno H."/>
        </authorList>
    </citation>
    <scope>NUCLEOTIDE SEQUENCE [LARGE SCALE GENOMIC DNA]</scope>
    <source>
        <strain>ATCC 15697 / DSM 20088 / JCM 1222 / NCTC 11817 / S12</strain>
    </source>
</reference>
<feature type="chain" id="PRO_1000190122" description="Glycerol-3-phosphate dehydrogenase [NAD(P)+]">
    <location>
        <begin position="1"/>
        <end position="333"/>
    </location>
</feature>
<feature type="active site" description="Proton acceptor" evidence="1">
    <location>
        <position position="193"/>
    </location>
</feature>
<feature type="binding site" evidence="1">
    <location>
        <position position="13"/>
    </location>
    <ligand>
        <name>NADPH</name>
        <dbReference type="ChEBI" id="CHEBI:57783"/>
    </ligand>
</feature>
<feature type="binding site" evidence="1">
    <location>
        <position position="33"/>
    </location>
    <ligand>
        <name>NADPH</name>
        <dbReference type="ChEBI" id="CHEBI:57783"/>
    </ligand>
</feature>
<feature type="binding site" evidence="1">
    <location>
        <position position="108"/>
    </location>
    <ligand>
        <name>NADPH</name>
        <dbReference type="ChEBI" id="CHEBI:57783"/>
    </ligand>
</feature>
<feature type="binding site" evidence="1">
    <location>
        <position position="108"/>
    </location>
    <ligand>
        <name>sn-glycerol 3-phosphate</name>
        <dbReference type="ChEBI" id="CHEBI:57597"/>
    </ligand>
</feature>
<feature type="binding site" evidence="1">
    <location>
        <position position="138"/>
    </location>
    <ligand>
        <name>sn-glycerol 3-phosphate</name>
        <dbReference type="ChEBI" id="CHEBI:57597"/>
    </ligand>
</feature>
<feature type="binding site" evidence="1">
    <location>
        <position position="142"/>
    </location>
    <ligand>
        <name>NADPH</name>
        <dbReference type="ChEBI" id="CHEBI:57783"/>
    </ligand>
</feature>
<feature type="binding site" evidence="1">
    <location>
        <position position="193"/>
    </location>
    <ligand>
        <name>sn-glycerol 3-phosphate</name>
        <dbReference type="ChEBI" id="CHEBI:57597"/>
    </ligand>
</feature>
<feature type="binding site" evidence="1">
    <location>
        <position position="246"/>
    </location>
    <ligand>
        <name>sn-glycerol 3-phosphate</name>
        <dbReference type="ChEBI" id="CHEBI:57597"/>
    </ligand>
</feature>
<feature type="binding site" evidence="1">
    <location>
        <position position="256"/>
    </location>
    <ligand>
        <name>sn-glycerol 3-phosphate</name>
        <dbReference type="ChEBI" id="CHEBI:57597"/>
    </ligand>
</feature>
<feature type="binding site" evidence="1">
    <location>
        <position position="257"/>
    </location>
    <ligand>
        <name>NADPH</name>
        <dbReference type="ChEBI" id="CHEBI:57783"/>
    </ligand>
</feature>
<feature type="binding site" evidence="1">
    <location>
        <position position="257"/>
    </location>
    <ligand>
        <name>sn-glycerol 3-phosphate</name>
        <dbReference type="ChEBI" id="CHEBI:57597"/>
    </ligand>
</feature>
<feature type="binding site" evidence="1">
    <location>
        <position position="258"/>
    </location>
    <ligand>
        <name>sn-glycerol 3-phosphate</name>
        <dbReference type="ChEBI" id="CHEBI:57597"/>
    </ligand>
</feature>
<feature type="binding site" evidence="1">
    <location>
        <position position="281"/>
    </location>
    <ligand>
        <name>NADPH</name>
        <dbReference type="ChEBI" id="CHEBI:57783"/>
    </ligand>
</feature>
<feature type="binding site" evidence="1">
    <location>
        <position position="283"/>
    </location>
    <ligand>
        <name>NADPH</name>
        <dbReference type="ChEBI" id="CHEBI:57783"/>
    </ligand>
</feature>
<dbReference type="EC" id="1.1.1.94" evidence="1"/>
<dbReference type="EMBL" id="CP001095">
    <property type="protein sequence ID" value="ACJ51444.1"/>
    <property type="molecule type" value="Genomic_DNA"/>
</dbReference>
<dbReference type="EMBL" id="AP010889">
    <property type="protein sequence ID" value="BAJ67919.1"/>
    <property type="molecule type" value="Genomic_DNA"/>
</dbReference>
<dbReference type="RefSeq" id="WP_012576752.1">
    <property type="nucleotide sequence ID" value="NZ_JDTT01000024.1"/>
</dbReference>
<dbReference type="SMR" id="B7GU03"/>
<dbReference type="KEGG" id="bln:Blon_0319"/>
<dbReference type="KEGG" id="blon:BLIJ_0325"/>
<dbReference type="PATRIC" id="fig|391904.8.peg.328"/>
<dbReference type="HOGENOM" id="CLU_033449_0_2_11"/>
<dbReference type="UniPathway" id="UPA00940"/>
<dbReference type="Proteomes" id="UP000001360">
    <property type="component" value="Chromosome"/>
</dbReference>
<dbReference type="GO" id="GO:0005829">
    <property type="term" value="C:cytosol"/>
    <property type="evidence" value="ECO:0007669"/>
    <property type="project" value="TreeGrafter"/>
</dbReference>
<dbReference type="GO" id="GO:0047952">
    <property type="term" value="F:glycerol-3-phosphate dehydrogenase [NAD(P)+] activity"/>
    <property type="evidence" value="ECO:0007669"/>
    <property type="project" value="UniProtKB-UniRule"/>
</dbReference>
<dbReference type="GO" id="GO:0051287">
    <property type="term" value="F:NAD binding"/>
    <property type="evidence" value="ECO:0007669"/>
    <property type="project" value="InterPro"/>
</dbReference>
<dbReference type="GO" id="GO:0005975">
    <property type="term" value="P:carbohydrate metabolic process"/>
    <property type="evidence" value="ECO:0007669"/>
    <property type="project" value="InterPro"/>
</dbReference>
<dbReference type="GO" id="GO:0046167">
    <property type="term" value="P:glycerol-3-phosphate biosynthetic process"/>
    <property type="evidence" value="ECO:0007669"/>
    <property type="project" value="UniProtKB-UniRule"/>
</dbReference>
<dbReference type="GO" id="GO:0046168">
    <property type="term" value="P:glycerol-3-phosphate catabolic process"/>
    <property type="evidence" value="ECO:0007669"/>
    <property type="project" value="InterPro"/>
</dbReference>
<dbReference type="GO" id="GO:0006650">
    <property type="term" value="P:glycerophospholipid metabolic process"/>
    <property type="evidence" value="ECO:0007669"/>
    <property type="project" value="UniProtKB-UniRule"/>
</dbReference>
<dbReference type="GO" id="GO:0008654">
    <property type="term" value="P:phospholipid biosynthetic process"/>
    <property type="evidence" value="ECO:0007669"/>
    <property type="project" value="UniProtKB-KW"/>
</dbReference>
<dbReference type="FunFam" id="1.10.1040.10:FF:000001">
    <property type="entry name" value="Glycerol-3-phosphate dehydrogenase [NAD(P)+]"/>
    <property type="match status" value="1"/>
</dbReference>
<dbReference type="FunFam" id="3.40.50.720:FF:000019">
    <property type="entry name" value="Glycerol-3-phosphate dehydrogenase [NAD(P)+]"/>
    <property type="match status" value="1"/>
</dbReference>
<dbReference type="Gene3D" id="1.10.1040.10">
    <property type="entry name" value="N-(1-d-carboxylethyl)-l-norvaline Dehydrogenase, domain 2"/>
    <property type="match status" value="1"/>
</dbReference>
<dbReference type="Gene3D" id="3.40.50.720">
    <property type="entry name" value="NAD(P)-binding Rossmann-like Domain"/>
    <property type="match status" value="1"/>
</dbReference>
<dbReference type="HAMAP" id="MF_00394">
    <property type="entry name" value="NAD_Glyc3P_dehydrog"/>
    <property type="match status" value="1"/>
</dbReference>
<dbReference type="InterPro" id="IPR008927">
    <property type="entry name" value="6-PGluconate_DH-like_C_sf"/>
</dbReference>
<dbReference type="InterPro" id="IPR013328">
    <property type="entry name" value="6PGD_dom2"/>
</dbReference>
<dbReference type="InterPro" id="IPR006168">
    <property type="entry name" value="G3P_DH_NAD-dep"/>
</dbReference>
<dbReference type="InterPro" id="IPR006109">
    <property type="entry name" value="G3P_DH_NAD-dep_C"/>
</dbReference>
<dbReference type="InterPro" id="IPR011128">
    <property type="entry name" value="G3P_DH_NAD-dep_N"/>
</dbReference>
<dbReference type="InterPro" id="IPR036291">
    <property type="entry name" value="NAD(P)-bd_dom_sf"/>
</dbReference>
<dbReference type="NCBIfam" id="NF000940">
    <property type="entry name" value="PRK00094.1-2"/>
    <property type="match status" value="1"/>
</dbReference>
<dbReference type="NCBIfam" id="NF000942">
    <property type="entry name" value="PRK00094.1-4"/>
    <property type="match status" value="1"/>
</dbReference>
<dbReference type="PANTHER" id="PTHR11728">
    <property type="entry name" value="GLYCEROL-3-PHOSPHATE DEHYDROGENASE"/>
    <property type="match status" value="1"/>
</dbReference>
<dbReference type="PANTHER" id="PTHR11728:SF1">
    <property type="entry name" value="GLYCEROL-3-PHOSPHATE DEHYDROGENASE [NAD(+)] 2, CHLOROPLASTIC"/>
    <property type="match status" value="1"/>
</dbReference>
<dbReference type="Pfam" id="PF07479">
    <property type="entry name" value="NAD_Gly3P_dh_C"/>
    <property type="match status" value="1"/>
</dbReference>
<dbReference type="Pfam" id="PF01210">
    <property type="entry name" value="NAD_Gly3P_dh_N"/>
    <property type="match status" value="1"/>
</dbReference>
<dbReference type="PIRSF" id="PIRSF000114">
    <property type="entry name" value="Glycerol-3-P_dh"/>
    <property type="match status" value="1"/>
</dbReference>
<dbReference type="PRINTS" id="PR00077">
    <property type="entry name" value="GPDHDRGNASE"/>
</dbReference>
<dbReference type="SUPFAM" id="SSF48179">
    <property type="entry name" value="6-phosphogluconate dehydrogenase C-terminal domain-like"/>
    <property type="match status" value="1"/>
</dbReference>
<dbReference type="SUPFAM" id="SSF51735">
    <property type="entry name" value="NAD(P)-binding Rossmann-fold domains"/>
    <property type="match status" value="1"/>
</dbReference>
<dbReference type="PROSITE" id="PS00957">
    <property type="entry name" value="NAD_G3PDH"/>
    <property type="match status" value="1"/>
</dbReference>
<accession>B7GU03</accession>
<accession>E8MP95</accession>
<keyword id="KW-0963">Cytoplasm</keyword>
<keyword id="KW-0444">Lipid biosynthesis</keyword>
<keyword id="KW-0443">Lipid metabolism</keyword>
<keyword id="KW-0520">NAD</keyword>
<keyword id="KW-0521">NADP</keyword>
<keyword id="KW-0547">Nucleotide-binding</keyword>
<keyword id="KW-0560">Oxidoreductase</keyword>
<keyword id="KW-0594">Phospholipid biosynthesis</keyword>
<keyword id="KW-1208">Phospholipid metabolism</keyword>
<name>GPDA_BIFLS</name>
<proteinExistence type="inferred from homology"/>
<sequence length="333" mass="34718">MGKNITVLGAGAWGTAFGQVLADAGNTVTMWAKEQRIVEDIRDRHHNAVRLPSVEKLPDNMTATGDRAEAVKNADIVVVAIAAQFARVALVEFKGLIPDHAIVVSLMKGIERGTNKRMDEVVRESLDLPADRFAAISGPNLSKEIADRHPAATVVACTNLDNATKVAEACTTSYFKPFVTTDVIGLEMCGSLKNVTALAVGMARGAGYGENTAAMIETRGLAELTALGAAAGADPKTFFGLAGVGDLIATCGSPLSRNYTFGANLGKGLTVEEATKVSNGVAEGVPTTDAVVALGEQLDVPTPLAYQMSRVLNEGISCSEMLAGLFGHEVTGE</sequence>
<gene>
    <name evidence="1" type="primary">gpsA</name>
    <name type="ordered locus">Blon_0319</name>
    <name type="ordered locus">BLIJ_0325</name>
</gene>
<protein>
    <recommendedName>
        <fullName evidence="1">Glycerol-3-phosphate dehydrogenase [NAD(P)+]</fullName>
        <ecNumber evidence="1">1.1.1.94</ecNumber>
    </recommendedName>
    <alternativeName>
        <fullName evidence="1">NAD(P)(+)-dependent glycerol-3-phosphate dehydrogenase</fullName>
    </alternativeName>
    <alternativeName>
        <fullName evidence="1">NAD(P)H-dependent dihydroxyacetone-phosphate reductase</fullName>
    </alternativeName>
</protein>
<evidence type="ECO:0000255" key="1">
    <source>
        <dbReference type="HAMAP-Rule" id="MF_00394"/>
    </source>
</evidence>
<organism>
    <name type="scientific">Bifidobacterium longum subsp. infantis (strain ATCC 15697 / DSM 20088 / JCM 1222 / NCTC 11817 / S12)</name>
    <dbReference type="NCBI Taxonomy" id="391904"/>
    <lineage>
        <taxon>Bacteria</taxon>
        <taxon>Bacillati</taxon>
        <taxon>Actinomycetota</taxon>
        <taxon>Actinomycetes</taxon>
        <taxon>Bifidobacteriales</taxon>
        <taxon>Bifidobacteriaceae</taxon>
        <taxon>Bifidobacterium</taxon>
    </lineage>
</organism>
<comment type="function">
    <text evidence="1">Catalyzes the reduction of the glycolytic intermediate dihydroxyacetone phosphate (DHAP) to sn-glycerol 3-phosphate (G3P), the key precursor for phospholipid synthesis.</text>
</comment>
<comment type="catalytic activity">
    <reaction evidence="1">
        <text>sn-glycerol 3-phosphate + NAD(+) = dihydroxyacetone phosphate + NADH + H(+)</text>
        <dbReference type="Rhea" id="RHEA:11092"/>
        <dbReference type="ChEBI" id="CHEBI:15378"/>
        <dbReference type="ChEBI" id="CHEBI:57540"/>
        <dbReference type="ChEBI" id="CHEBI:57597"/>
        <dbReference type="ChEBI" id="CHEBI:57642"/>
        <dbReference type="ChEBI" id="CHEBI:57945"/>
        <dbReference type="EC" id="1.1.1.94"/>
    </reaction>
    <physiologicalReaction direction="right-to-left" evidence="1">
        <dbReference type="Rhea" id="RHEA:11094"/>
    </physiologicalReaction>
</comment>
<comment type="catalytic activity">
    <reaction evidence="1">
        <text>sn-glycerol 3-phosphate + NADP(+) = dihydroxyacetone phosphate + NADPH + H(+)</text>
        <dbReference type="Rhea" id="RHEA:11096"/>
        <dbReference type="ChEBI" id="CHEBI:15378"/>
        <dbReference type="ChEBI" id="CHEBI:57597"/>
        <dbReference type="ChEBI" id="CHEBI:57642"/>
        <dbReference type="ChEBI" id="CHEBI:57783"/>
        <dbReference type="ChEBI" id="CHEBI:58349"/>
        <dbReference type="EC" id="1.1.1.94"/>
    </reaction>
    <physiologicalReaction direction="right-to-left" evidence="1">
        <dbReference type="Rhea" id="RHEA:11098"/>
    </physiologicalReaction>
</comment>
<comment type="pathway">
    <text evidence="1">Membrane lipid metabolism; glycerophospholipid metabolism.</text>
</comment>
<comment type="subcellular location">
    <subcellularLocation>
        <location evidence="1">Cytoplasm</location>
    </subcellularLocation>
</comment>
<comment type="similarity">
    <text evidence="1">Belongs to the NAD-dependent glycerol-3-phosphate dehydrogenase family.</text>
</comment>